<accession>Q54YG9</accession>
<dbReference type="EMBL" id="AAFI02000023">
    <property type="protein sequence ID" value="EAL68293.1"/>
    <property type="molecule type" value="Genomic_DNA"/>
</dbReference>
<dbReference type="RefSeq" id="XP_642233.1">
    <property type="nucleotide sequence ID" value="XM_637141.1"/>
</dbReference>
<dbReference type="SMR" id="Q54YG9"/>
<dbReference type="FunCoup" id="Q54YG9">
    <property type="interactions" value="1216"/>
</dbReference>
<dbReference type="STRING" id="44689.Q54YG9"/>
<dbReference type="PaxDb" id="44689-DDB0216299"/>
<dbReference type="EnsemblProtists" id="EAL68293">
    <property type="protein sequence ID" value="EAL68293"/>
    <property type="gene ID" value="DDB_G0278241"/>
</dbReference>
<dbReference type="GeneID" id="8621441"/>
<dbReference type="KEGG" id="ddi:DDB_G0278241"/>
<dbReference type="dictyBase" id="DDB_G0278241">
    <property type="gene designation" value="tcea1"/>
</dbReference>
<dbReference type="VEuPathDB" id="AmoebaDB:DDB_G0278241"/>
<dbReference type="eggNOG" id="KOG1105">
    <property type="taxonomic scope" value="Eukaryota"/>
</dbReference>
<dbReference type="HOGENOM" id="CLU_037637_2_0_1"/>
<dbReference type="InParanoid" id="Q54YG9"/>
<dbReference type="OMA" id="RFVVMTH"/>
<dbReference type="PhylomeDB" id="Q54YG9"/>
<dbReference type="Reactome" id="R-DDI-6781823">
    <property type="pathway name" value="Formation of TC-NER Pre-Incision Complex"/>
</dbReference>
<dbReference type="Reactome" id="R-DDI-6782135">
    <property type="pathway name" value="Dual incision in TC-NER"/>
</dbReference>
<dbReference type="Reactome" id="R-DDI-6782210">
    <property type="pathway name" value="Gap-filling DNA repair synthesis and ligation in TC-NER"/>
</dbReference>
<dbReference type="Reactome" id="R-DDI-6796648">
    <property type="pathway name" value="TP53 Regulates Transcription of DNA Repair Genes"/>
</dbReference>
<dbReference type="PRO" id="PR:Q54YG9"/>
<dbReference type="Proteomes" id="UP000002195">
    <property type="component" value="Chromosome 3"/>
</dbReference>
<dbReference type="GO" id="GO:0005634">
    <property type="term" value="C:nucleus"/>
    <property type="evidence" value="ECO:0000250"/>
    <property type="project" value="dictyBase"/>
</dbReference>
<dbReference type="GO" id="GO:0000977">
    <property type="term" value="F:RNA polymerase II transcription regulatory region sequence-specific DNA binding"/>
    <property type="evidence" value="ECO:0000250"/>
    <property type="project" value="dictyBase"/>
</dbReference>
<dbReference type="GO" id="GO:0008270">
    <property type="term" value="F:zinc ion binding"/>
    <property type="evidence" value="ECO:0007669"/>
    <property type="project" value="UniProtKB-KW"/>
</dbReference>
<dbReference type="GO" id="GO:0006357">
    <property type="term" value="P:regulation of transcription by RNA polymerase II"/>
    <property type="evidence" value="ECO:0000318"/>
    <property type="project" value="GO_Central"/>
</dbReference>
<dbReference type="GO" id="GO:0006368">
    <property type="term" value="P:transcription elongation by RNA polymerase II"/>
    <property type="evidence" value="ECO:0000250"/>
    <property type="project" value="dictyBase"/>
</dbReference>
<dbReference type="CDD" id="cd00183">
    <property type="entry name" value="TFIIS_I"/>
    <property type="match status" value="1"/>
</dbReference>
<dbReference type="CDD" id="cd13749">
    <property type="entry name" value="Zn-ribbon_TFIIS"/>
    <property type="match status" value="1"/>
</dbReference>
<dbReference type="FunFam" id="2.20.25.10:FF:000001">
    <property type="entry name" value="Probable Transcription elongation factor S-II"/>
    <property type="match status" value="1"/>
</dbReference>
<dbReference type="FunFam" id="1.20.930.10:FF:000007">
    <property type="entry name" value="Transcription elongation factor S-II"/>
    <property type="match status" value="1"/>
</dbReference>
<dbReference type="Gene3D" id="2.20.25.10">
    <property type="match status" value="1"/>
</dbReference>
<dbReference type="Gene3D" id="1.20.930.10">
    <property type="entry name" value="Conserved domain common to transcription factors TFIIS, elongin A, CRSP70"/>
    <property type="match status" value="1"/>
</dbReference>
<dbReference type="Gene3D" id="1.10.472.30">
    <property type="entry name" value="Transcription elongation factor S-II, central domain"/>
    <property type="match status" value="1"/>
</dbReference>
<dbReference type="InterPro" id="IPR035100">
    <property type="entry name" value="TF_IIS-typ"/>
</dbReference>
<dbReference type="InterPro" id="IPR003617">
    <property type="entry name" value="TFIIS/CRSP70_N_sub"/>
</dbReference>
<dbReference type="InterPro" id="IPR035441">
    <property type="entry name" value="TFIIS/LEDGF_dom_sf"/>
</dbReference>
<dbReference type="InterPro" id="IPR003618">
    <property type="entry name" value="TFIIS_cen_dom"/>
</dbReference>
<dbReference type="InterPro" id="IPR036575">
    <property type="entry name" value="TFIIS_cen_dom_sf"/>
</dbReference>
<dbReference type="InterPro" id="IPR017923">
    <property type="entry name" value="TFIIS_N"/>
</dbReference>
<dbReference type="InterPro" id="IPR001222">
    <property type="entry name" value="Znf_TFIIS"/>
</dbReference>
<dbReference type="PANTHER" id="PTHR11477:SF0">
    <property type="entry name" value="IP08861P-RELATED"/>
    <property type="match status" value="1"/>
</dbReference>
<dbReference type="PANTHER" id="PTHR11477">
    <property type="entry name" value="TRANSCRIPTION FACTOR S-II ZINC FINGER DOMAIN-CONTAINING PROTEIN"/>
    <property type="match status" value="1"/>
</dbReference>
<dbReference type="Pfam" id="PF08711">
    <property type="entry name" value="Med26"/>
    <property type="match status" value="1"/>
</dbReference>
<dbReference type="Pfam" id="PF07500">
    <property type="entry name" value="TFIIS_M"/>
    <property type="match status" value="1"/>
</dbReference>
<dbReference type="Pfam" id="PF01096">
    <property type="entry name" value="Zn_ribbon_TFIIS"/>
    <property type="match status" value="1"/>
</dbReference>
<dbReference type="PIRSF" id="PIRSF006704">
    <property type="entry name" value="TF_IIS"/>
    <property type="match status" value="1"/>
</dbReference>
<dbReference type="SMART" id="SM00510">
    <property type="entry name" value="TFS2M"/>
    <property type="match status" value="1"/>
</dbReference>
<dbReference type="SMART" id="SM00509">
    <property type="entry name" value="TFS2N"/>
    <property type="match status" value="1"/>
</dbReference>
<dbReference type="SMART" id="SM00440">
    <property type="entry name" value="ZnF_C2C2"/>
    <property type="match status" value="1"/>
</dbReference>
<dbReference type="SUPFAM" id="SSF47676">
    <property type="entry name" value="Conserved domain common to transcription factors TFIIS, elongin A, CRSP70"/>
    <property type="match status" value="1"/>
</dbReference>
<dbReference type="SUPFAM" id="SSF46942">
    <property type="entry name" value="Elongation factor TFIIS domain 2"/>
    <property type="match status" value="1"/>
</dbReference>
<dbReference type="SUPFAM" id="SSF57783">
    <property type="entry name" value="Zinc beta-ribbon"/>
    <property type="match status" value="1"/>
</dbReference>
<dbReference type="PROSITE" id="PS51321">
    <property type="entry name" value="TFIIS_CENTRAL"/>
    <property type="match status" value="1"/>
</dbReference>
<dbReference type="PROSITE" id="PS51319">
    <property type="entry name" value="TFIIS_N"/>
    <property type="match status" value="1"/>
</dbReference>
<dbReference type="PROSITE" id="PS00466">
    <property type="entry name" value="ZF_TFIIS_1"/>
    <property type="match status" value="1"/>
</dbReference>
<dbReference type="PROSITE" id="PS51133">
    <property type="entry name" value="ZF_TFIIS_2"/>
    <property type="match status" value="1"/>
</dbReference>
<proteinExistence type="inferred from homology"/>
<protein>
    <recommendedName>
        <fullName>Transcription elongation factor A protein 1</fullName>
    </recommendedName>
    <alternativeName>
        <fullName>Transcription elongation factor S-II protein 1</fullName>
    </alternativeName>
    <alternativeName>
        <fullName>Transcription elongation factor tf2s</fullName>
    </alternativeName>
</protein>
<organism>
    <name type="scientific">Dictyostelium discoideum</name>
    <name type="common">Social amoeba</name>
    <dbReference type="NCBI Taxonomy" id="44689"/>
    <lineage>
        <taxon>Eukaryota</taxon>
        <taxon>Amoebozoa</taxon>
        <taxon>Evosea</taxon>
        <taxon>Eumycetozoa</taxon>
        <taxon>Dictyostelia</taxon>
        <taxon>Dictyosteliales</taxon>
        <taxon>Dictyosteliaceae</taxon>
        <taxon>Dictyostelium</taxon>
    </lineage>
</organism>
<gene>
    <name type="primary">tcea1</name>
    <name type="synonym">tf2s</name>
    <name type="ORF">DDB_G0278241</name>
</gene>
<name>TCEA1_DICDI</name>
<keyword id="KW-0238">DNA-binding</keyword>
<keyword id="KW-0479">Metal-binding</keyword>
<keyword id="KW-0539">Nucleus</keyword>
<keyword id="KW-1185">Reference proteome</keyword>
<keyword id="KW-0804">Transcription</keyword>
<keyword id="KW-0805">Transcription regulation</keyword>
<keyword id="KW-0862">Zinc</keyword>
<keyword id="KW-0863">Zinc-finger</keyword>
<feature type="chain" id="PRO_0000328280" description="Transcription elongation factor A protein 1">
    <location>
        <begin position="1"/>
        <end position="319"/>
    </location>
</feature>
<feature type="domain" description="TFIIS N-terminal" evidence="3">
    <location>
        <begin position="1"/>
        <end position="78"/>
    </location>
</feature>
<feature type="domain" description="TFIIS central" evidence="4">
    <location>
        <begin position="160"/>
        <end position="272"/>
    </location>
</feature>
<feature type="zinc finger region" description="TFIIS-type" evidence="2">
    <location>
        <begin position="275"/>
        <end position="317"/>
    </location>
</feature>
<feature type="region of interest" description="Disordered" evidence="5">
    <location>
        <begin position="78"/>
        <end position="146"/>
    </location>
</feature>
<feature type="compositionally biased region" description="Low complexity" evidence="5">
    <location>
        <begin position="78"/>
        <end position="106"/>
    </location>
</feature>
<feature type="compositionally biased region" description="Basic and acidic residues" evidence="5">
    <location>
        <begin position="107"/>
        <end position="122"/>
    </location>
</feature>
<feature type="compositionally biased region" description="Low complexity" evidence="5">
    <location>
        <begin position="133"/>
        <end position="146"/>
    </location>
</feature>
<feature type="binding site" evidence="2">
    <location>
        <position position="279"/>
    </location>
    <ligand>
        <name>Zn(2+)</name>
        <dbReference type="ChEBI" id="CHEBI:29105"/>
    </ligand>
</feature>
<feature type="binding site" evidence="2">
    <location>
        <position position="282"/>
    </location>
    <ligand>
        <name>Zn(2+)</name>
        <dbReference type="ChEBI" id="CHEBI:29105"/>
    </ligand>
</feature>
<feature type="binding site" evidence="2">
    <location>
        <position position="307"/>
    </location>
    <ligand>
        <name>Zn(2+)</name>
        <dbReference type="ChEBI" id="CHEBI:29105"/>
    </ligand>
</feature>
<feature type="binding site" evidence="2">
    <location>
        <position position="312"/>
    </location>
    <ligand>
        <name>Zn(2+)</name>
        <dbReference type="ChEBI" id="CHEBI:29105"/>
    </ligand>
</feature>
<evidence type="ECO:0000250" key="1"/>
<evidence type="ECO:0000255" key="2">
    <source>
        <dbReference type="PROSITE-ProRule" id="PRU00472"/>
    </source>
</evidence>
<evidence type="ECO:0000255" key="3">
    <source>
        <dbReference type="PROSITE-ProRule" id="PRU00649"/>
    </source>
</evidence>
<evidence type="ECO:0000255" key="4">
    <source>
        <dbReference type="PROSITE-ProRule" id="PRU00651"/>
    </source>
</evidence>
<evidence type="ECO:0000256" key="5">
    <source>
        <dbReference type="SAM" id="MobiDB-lite"/>
    </source>
</evidence>
<evidence type="ECO:0000305" key="6"/>
<sequence>MQEIIKCREQLEKAIKDGEFDKALECLKNAKNFKITKDLLKSTDIGKSVGKLRAHKDIGISSQSKELIDKWKQDIEGTSATTTSSSSSSSSSTTSTTTTKTASPSESLKRKSISEDTSDRPTSKPLLQENKKISPPTTPKTSSPPIASLIAPITGANADLRNKTIQLFVEALTTDNDETMSPPEDIAVEIEAEMYDIYRGVSKEYKEKLRSFKFNLKKNDILRLSLLNRQISVAKFCSMDIYSMASDDLKEERKKLDKFNTEASMLGQNNEATTDQFQCGKCKQRKCTYTQLQTRSADEPPTTFVKCCVKGCGNRWRFC</sequence>
<reference key="1">
    <citation type="journal article" date="2005" name="Nature">
        <title>The genome of the social amoeba Dictyostelium discoideum.</title>
        <authorList>
            <person name="Eichinger L."/>
            <person name="Pachebat J.A."/>
            <person name="Gloeckner G."/>
            <person name="Rajandream M.A."/>
            <person name="Sucgang R."/>
            <person name="Berriman M."/>
            <person name="Song J."/>
            <person name="Olsen R."/>
            <person name="Szafranski K."/>
            <person name="Xu Q."/>
            <person name="Tunggal B."/>
            <person name="Kummerfeld S."/>
            <person name="Madera M."/>
            <person name="Konfortov B.A."/>
            <person name="Rivero F."/>
            <person name="Bankier A.T."/>
            <person name="Lehmann R."/>
            <person name="Hamlin N."/>
            <person name="Davies R."/>
            <person name="Gaudet P."/>
            <person name="Fey P."/>
            <person name="Pilcher K."/>
            <person name="Chen G."/>
            <person name="Saunders D."/>
            <person name="Sodergren E.J."/>
            <person name="Davis P."/>
            <person name="Kerhornou A."/>
            <person name="Nie X."/>
            <person name="Hall N."/>
            <person name="Anjard C."/>
            <person name="Hemphill L."/>
            <person name="Bason N."/>
            <person name="Farbrother P."/>
            <person name="Desany B."/>
            <person name="Just E."/>
            <person name="Morio T."/>
            <person name="Rost R."/>
            <person name="Churcher C.M."/>
            <person name="Cooper J."/>
            <person name="Haydock S."/>
            <person name="van Driessche N."/>
            <person name="Cronin A."/>
            <person name="Goodhead I."/>
            <person name="Muzny D.M."/>
            <person name="Mourier T."/>
            <person name="Pain A."/>
            <person name="Lu M."/>
            <person name="Harper D."/>
            <person name="Lindsay R."/>
            <person name="Hauser H."/>
            <person name="James K.D."/>
            <person name="Quiles M."/>
            <person name="Madan Babu M."/>
            <person name="Saito T."/>
            <person name="Buchrieser C."/>
            <person name="Wardroper A."/>
            <person name="Felder M."/>
            <person name="Thangavelu M."/>
            <person name="Johnson D."/>
            <person name="Knights A."/>
            <person name="Loulseged H."/>
            <person name="Mungall K.L."/>
            <person name="Oliver K."/>
            <person name="Price C."/>
            <person name="Quail M.A."/>
            <person name="Urushihara H."/>
            <person name="Hernandez J."/>
            <person name="Rabbinowitsch E."/>
            <person name="Steffen D."/>
            <person name="Sanders M."/>
            <person name="Ma J."/>
            <person name="Kohara Y."/>
            <person name="Sharp S."/>
            <person name="Simmonds M.N."/>
            <person name="Spiegler S."/>
            <person name="Tivey A."/>
            <person name="Sugano S."/>
            <person name="White B."/>
            <person name="Walker D."/>
            <person name="Woodward J.R."/>
            <person name="Winckler T."/>
            <person name="Tanaka Y."/>
            <person name="Shaulsky G."/>
            <person name="Schleicher M."/>
            <person name="Weinstock G.M."/>
            <person name="Rosenthal A."/>
            <person name="Cox E.C."/>
            <person name="Chisholm R.L."/>
            <person name="Gibbs R.A."/>
            <person name="Loomis W.F."/>
            <person name="Platzer M."/>
            <person name="Kay R.R."/>
            <person name="Williams J.G."/>
            <person name="Dear P.H."/>
            <person name="Noegel A.A."/>
            <person name="Barrell B.G."/>
            <person name="Kuspa A."/>
        </authorList>
    </citation>
    <scope>NUCLEOTIDE SEQUENCE [LARGE SCALE GENOMIC DNA]</scope>
    <source>
        <strain>AX4</strain>
    </source>
</reference>
<comment type="function">
    <text evidence="1">Necessary for efficient RNA polymerase II transcription elongation past template-encoded arresting sites. The arresting sites in DNA have the property of trapping a certain fraction of elongating RNA polymerases that pass through, resulting in locked ternary complexes. Cleavage of the nascent transcript by S-II allows the resumption of elongation from the new 3'-terminus (By similarity).</text>
</comment>
<comment type="subcellular location">
    <subcellularLocation>
        <location evidence="3 4">Nucleus</location>
    </subcellularLocation>
</comment>
<comment type="similarity">
    <text evidence="6">Belongs to the TFS-II family.</text>
</comment>